<organism>
    <name type="scientific">Staphylococcus aureus (strain N315)</name>
    <dbReference type="NCBI Taxonomy" id="158879"/>
    <lineage>
        <taxon>Bacteria</taxon>
        <taxon>Bacillati</taxon>
        <taxon>Bacillota</taxon>
        <taxon>Bacilli</taxon>
        <taxon>Bacillales</taxon>
        <taxon>Staphylococcaceae</taxon>
        <taxon>Staphylococcus</taxon>
    </lineage>
</organism>
<feature type="chain" id="PRO_0000095331" description="Tyrosine recombinase XerC">
    <location>
        <begin position="1"/>
        <end position="298"/>
    </location>
</feature>
<feature type="domain" description="Core-binding (CB)" evidence="3">
    <location>
        <begin position="1"/>
        <end position="84"/>
    </location>
</feature>
<feature type="domain" description="Tyr recombinase" evidence="2">
    <location>
        <begin position="105"/>
        <end position="286"/>
    </location>
</feature>
<feature type="active site" evidence="1">
    <location>
        <position position="145"/>
    </location>
</feature>
<feature type="active site" evidence="1">
    <location>
        <position position="169"/>
    </location>
</feature>
<feature type="active site" evidence="1">
    <location>
        <position position="238"/>
    </location>
</feature>
<feature type="active site" evidence="1">
    <location>
        <position position="241"/>
    </location>
</feature>
<feature type="active site" evidence="1">
    <location>
        <position position="264"/>
    </location>
</feature>
<feature type="active site" description="O-(3'-phospho-DNA)-tyrosine intermediate" evidence="1">
    <location>
        <position position="273"/>
    </location>
</feature>
<dbReference type="EMBL" id="BA000018">
    <property type="protein sequence ID" value="BAB42347.1"/>
    <property type="molecule type" value="Genomic_DNA"/>
</dbReference>
<dbReference type="PIR" id="G89898">
    <property type="entry name" value="G89898"/>
</dbReference>
<dbReference type="RefSeq" id="WP_001015601.1">
    <property type="nucleotide sequence ID" value="NC_002745.2"/>
</dbReference>
<dbReference type="SMR" id="P67631"/>
<dbReference type="EnsemblBacteria" id="BAB42347">
    <property type="protein sequence ID" value="BAB42347"/>
    <property type="gene ID" value="BAB42347"/>
</dbReference>
<dbReference type="KEGG" id="sau:SA1095"/>
<dbReference type="HOGENOM" id="CLU_027562_9_0_9"/>
<dbReference type="GO" id="GO:0005737">
    <property type="term" value="C:cytoplasm"/>
    <property type="evidence" value="ECO:0007669"/>
    <property type="project" value="UniProtKB-SubCell"/>
</dbReference>
<dbReference type="GO" id="GO:0003677">
    <property type="term" value="F:DNA binding"/>
    <property type="evidence" value="ECO:0007669"/>
    <property type="project" value="UniProtKB-KW"/>
</dbReference>
<dbReference type="GO" id="GO:0009037">
    <property type="term" value="F:tyrosine-based site-specific recombinase activity"/>
    <property type="evidence" value="ECO:0007669"/>
    <property type="project" value="UniProtKB-UniRule"/>
</dbReference>
<dbReference type="GO" id="GO:0051301">
    <property type="term" value="P:cell division"/>
    <property type="evidence" value="ECO:0007669"/>
    <property type="project" value="UniProtKB-KW"/>
</dbReference>
<dbReference type="GO" id="GO:0007059">
    <property type="term" value="P:chromosome segregation"/>
    <property type="evidence" value="ECO:0007669"/>
    <property type="project" value="UniProtKB-UniRule"/>
</dbReference>
<dbReference type="GO" id="GO:0006313">
    <property type="term" value="P:DNA transposition"/>
    <property type="evidence" value="ECO:0007669"/>
    <property type="project" value="UniProtKB-UniRule"/>
</dbReference>
<dbReference type="CDD" id="cd00798">
    <property type="entry name" value="INT_XerDC_C"/>
    <property type="match status" value="1"/>
</dbReference>
<dbReference type="Gene3D" id="1.10.150.130">
    <property type="match status" value="1"/>
</dbReference>
<dbReference type="Gene3D" id="1.10.443.10">
    <property type="entry name" value="Intergrase catalytic core"/>
    <property type="match status" value="1"/>
</dbReference>
<dbReference type="HAMAP" id="MF_01808">
    <property type="entry name" value="Recomb_XerC_XerD"/>
    <property type="match status" value="1"/>
</dbReference>
<dbReference type="InterPro" id="IPR044068">
    <property type="entry name" value="CB"/>
</dbReference>
<dbReference type="InterPro" id="IPR011010">
    <property type="entry name" value="DNA_brk_join_enz"/>
</dbReference>
<dbReference type="InterPro" id="IPR013762">
    <property type="entry name" value="Integrase-like_cat_sf"/>
</dbReference>
<dbReference type="InterPro" id="IPR002104">
    <property type="entry name" value="Integrase_catalytic"/>
</dbReference>
<dbReference type="InterPro" id="IPR010998">
    <property type="entry name" value="Integrase_recombinase_N"/>
</dbReference>
<dbReference type="InterPro" id="IPR004107">
    <property type="entry name" value="Integrase_SAM-like_N"/>
</dbReference>
<dbReference type="InterPro" id="IPR011931">
    <property type="entry name" value="Recomb_XerC"/>
</dbReference>
<dbReference type="InterPro" id="IPR023009">
    <property type="entry name" value="Tyrosine_recombinase_XerC/XerD"/>
</dbReference>
<dbReference type="InterPro" id="IPR050090">
    <property type="entry name" value="Tyrosine_recombinase_XerCD"/>
</dbReference>
<dbReference type="NCBIfam" id="NF001399">
    <property type="entry name" value="PRK00283.1"/>
    <property type="match status" value="1"/>
</dbReference>
<dbReference type="NCBIfam" id="NF040815">
    <property type="entry name" value="recomb_XerA_Arch"/>
    <property type="match status" value="1"/>
</dbReference>
<dbReference type="NCBIfam" id="TIGR02224">
    <property type="entry name" value="recomb_XerC"/>
    <property type="match status" value="1"/>
</dbReference>
<dbReference type="PANTHER" id="PTHR30349">
    <property type="entry name" value="PHAGE INTEGRASE-RELATED"/>
    <property type="match status" value="1"/>
</dbReference>
<dbReference type="PANTHER" id="PTHR30349:SF77">
    <property type="entry name" value="TYROSINE RECOMBINASE XERC"/>
    <property type="match status" value="1"/>
</dbReference>
<dbReference type="Pfam" id="PF02899">
    <property type="entry name" value="Phage_int_SAM_1"/>
    <property type="match status" value="1"/>
</dbReference>
<dbReference type="Pfam" id="PF00589">
    <property type="entry name" value="Phage_integrase"/>
    <property type="match status" value="1"/>
</dbReference>
<dbReference type="SUPFAM" id="SSF56349">
    <property type="entry name" value="DNA breaking-rejoining enzymes"/>
    <property type="match status" value="1"/>
</dbReference>
<dbReference type="PROSITE" id="PS51900">
    <property type="entry name" value="CB"/>
    <property type="match status" value="1"/>
</dbReference>
<dbReference type="PROSITE" id="PS51898">
    <property type="entry name" value="TYR_RECOMBINASE"/>
    <property type="match status" value="1"/>
</dbReference>
<proteinExistence type="inferred from homology"/>
<evidence type="ECO:0000255" key="1">
    <source>
        <dbReference type="HAMAP-Rule" id="MF_01808"/>
    </source>
</evidence>
<evidence type="ECO:0000255" key="2">
    <source>
        <dbReference type="PROSITE-ProRule" id="PRU01246"/>
    </source>
</evidence>
<evidence type="ECO:0000255" key="3">
    <source>
        <dbReference type="PROSITE-ProRule" id="PRU01248"/>
    </source>
</evidence>
<accession>P67631</accession>
<accession>Q99UL9</accession>
<sequence length="298" mass="35154">MNHIQEAFLNTLKVERNFSEHTLKSYQDDLIQFNQFLEQEHLQLKTFEYRDARNYLSYLYSNHLKRTSVSRKISTLRTFYEYWMTLDENIINPFVQLVHPKKEKYLPQFFYEEEMEALFKTVEEDTSKNLRDRVILELLYATGIRVSELVNIKKQDIDFYANGVTVLGKGSKERFVPFGAYCRQSIENYLEHFKPIQSCNHDFLILNMKGEAITERGVRYVLNDIVKRTAGVSEIHPHKLRHTFATHLLNQGADLRTVQSLLGHVNLSTTGKYTHVSNQQLRKVYLNAHPRAKKENET</sequence>
<name>XERC_STAAN</name>
<keyword id="KW-0131">Cell cycle</keyword>
<keyword id="KW-0132">Cell division</keyword>
<keyword id="KW-0159">Chromosome partition</keyword>
<keyword id="KW-0963">Cytoplasm</keyword>
<keyword id="KW-0229">DNA integration</keyword>
<keyword id="KW-0233">DNA recombination</keyword>
<keyword id="KW-0238">DNA-binding</keyword>
<reference key="1">
    <citation type="journal article" date="2001" name="Lancet">
        <title>Whole genome sequencing of meticillin-resistant Staphylococcus aureus.</title>
        <authorList>
            <person name="Kuroda M."/>
            <person name="Ohta T."/>
            <person name="Uchiyama I."/>
            <person name="Baba T."/>
            <person name="Yuzawa H."/>
            <person name="Kobayashi I."/>
            <person name="Cui L."/>
            <person name="Oguchi A."/>
            <person name="Aoki K."/>
            <person name="Nagai Y."/>
            <person name="Lian J.-Q."/>
            <person name="Ito T."/>
            <person name="Kanamori M."/>
            <person name="Matsumaru H."/>
            <person name="Maruyama A."/>
            <person name="Murakami H."/>
            <person name="Hosoyama A."/>
            <person name="Mizutani-Ui Y."/>
            <person name="Takahashi N.K."/>
            <person name="Sawano T."/>
            <person name="Inoue R."/>
            <person name="Kaito C."/>
            <person name="Sekimizu K."/>
            <person name="Hirakawa H."/>
            <person name="Kuhara S."/>
            <person name="Goto S."/>
            <person name="Yabuzaki J."/>
            <person name="Kanehisa M."/>
            <person name="Yamashita A."/>
            <person name="Oshima K."/>
            <person name="Furuya K."/>
            <person name="Yoshino C."/>
            <person name="Shiba T."/>
            <person name="Hattori M."/>
            <person name="Ogasawara N."/>
            <person name="Hayashi H."/>
            <person name="Hiramatsu K."/>
        </authorList>
    </citation>
    <scope>NUCLEOTIDE SEQUENCE [LARGE SCALE GENOMIC DNA]</scope>
    <source>
        <strain>N315</strain>
    </source>
</reference>
<gene>
    <name evidence="1" type="primary">xerC</name>
    <name type="ordered locus">SA1095</name>
</gene>
<protein>
    <recommendedName>
        <fullName evidence="1">Tyrosine recombinase XerC</fullName>
    </recommendedName>
</protein>
<comment type="function">
    <text evidence="1">Site-specific tyrosine recombinase, which acts by catalyzing the cutting and rejoining of the recombining DNA molecules. The XerC-XerD complex is essential to convert dimers of the bacterial chromosome into monomers to permit their segregation at cell division. It also contributes to the segregational stability of plasmids.</text>
</comment>
<comment type="subunit">
    <text evidence="1">Forms a cyclic heterotetrameric complex composed of two molecules of XerC and two molecules of XerD.</text>
</comment>
<comment type="subcellular location">
    <subcellularLocation>
        <location evidence="1">Cytoplasm</location>
    </subcellularLocation>
</comment>
<comment type="similarity">
    <text evidence="1">Belongs to the 'phage' integrase family. XerC subfamily.</text>
</comment>